<protein>
    <recommendedName>
        <fullName evidence="1">Peptide deformylase</fullName>
        <shortName evidence="1">PDF</shortName>
        <ecNumber evidence="1">3.5.1.88</ecNumber>
    </recommendedName>
    <alternativeName>
        <fullName evidence="1">Polypeptide deformylase</fullName>
    </alternativeName>
</protein>
<keyword id="KW-0378">Hydrolase</keyword>
<keyword id="KW-0408">Iron</keyword>
<keyword id="KW-0479">Metal-binding</keyword>
<keyword id="KW-0648">Protein biosynthesis</keyword>
<dbReference type="EC" id="3.5.1.88" evidence="1"/>
<dbReference type="EMBL" id="CP000139">
    <property type="protein sequence ID" value="ABR41663.1"/>
    <property type="molecule type" value="Genomic_DNA"/>
</dbReference>
<dbReference type="RefSeq" id="WP_005847106.1">
    <property type="nucleotide sequence ID" value="NZ_CAXVNH010000002.1"/>
</dbReference>
<dbReference type="SMR" id="A6L7J9"/>
<dbReference type="STRING" id="435590.BVU_4061"/>
<dbReference type="PaxDb" id="435590-BVU_4061"/>
<dbReference type="GeneID" id="5305020"/>
<dbReference type="KEGG" id="bvu:BVU_4061"/>
<dbReference type="eggNOG" id="COG0242">
    <property type="taxonomic scope" value="Bacteria"/>
</dbReference>
<dbReference type="HOGENOM" id="CLU_061901_2_0_10"/>
<dbReference type="BioCyc" id="BVUL435590:G1G59-4200-MONOMER"/>
<dbReference type="Proteomes" id="UP000002861">
    <property type="component" value="Chromosome"/>
</dbReference>
<dbReference type="GO" id="GO:0046872">
    <property type="term" value="F:metal ion binding"/>
    <property type="evidence" value="ECO:0007669"/>
    <property type="project" value="UniProtKB-KW"/>
</dbReference>
<dbReference type="GO" id="GO:0042586">
    <property type="term" value="F:peptide deformylase activity"/>
    <property type="evidence" value="ECO:0007669"/>
    <property type="project" value="UniProtKB-UniRule"/>
</dbReference>
<dbReference type="GO" id="GO:0043686">
    <property type="term" value="P:co-translational protein modification"/>
    <property type="evidence" value="ECO:0007669"/>
    <property type="project" value="TreeGrafter"/>
</dbReference>
<dbReference type="GO" id="GO:0006412">
    <property type="term" value="P:translation"/>
    <property type="evidence" value="ECO:0007669"/>
    <property type="project" value="UniProtKB-UniRule"/>
</dbReference>
<dbReference type="CDD" id="cd00487">
    <property type="entry name" value="Pep_deformylase"/>
    <property type="match status" value="1"/>
</dbReference>
<dbReference type="Gene3D" id="3.90.45.10">
    <property type="entry name" value="Peptide deformylase"/>
    <property type="match status" value="1"/>
</dbReference>
<dbReference type="HAMAP" id="MF_00163">
    <property type="entry name" value="Pep_deformylase"/>
    <property type="match status" value="1"/>
</dbReference>
<dbReference type="InterPro" id="IPR023635">
    <property type="entry name" value="Peptide_deformylase"/>
</dbReference>
<dbReference type="InterPro" id="IPR036821">
    <property type="entry name" value="Peptide_deformylase_sf"/>
</dbReference>
<dbReference type="NCBIfam" id="TIGR00079">
    <property type="entry name" value="pept_deformyl"/>
    <property type="match status" value="1"/>
</dbReference>
<dbReference type="NCBIfam" id="NF001159">
    <property type="entry name" value="PRK00150.1-3"/>
    <property type="match status" value="1"/>
</dbReference>
<dbReference type="PANTHER" id="PTHR10458">
    <property type="entry name" value="PEPTIDE DEFORMYLASE"/>
    <property type="match status" value="1"/>
</dbReference>
<dbReference type="PANTHER" id="PTHR10458:SF22">
    <property type="entry name" value="PEPTIDE DEFORMYLASE"/>
    <property type="match status" value="1"/>
</dbReference>
<dbReference type="Pfam" id="PF01327">
    <property type="entry name" value="Pep_deformylase"/>
    <property type="match status" value="1"/>
</dbReference>
<dbReference type="PIRSF" id="PIRSF004749">
    <property type="entry name" value="Pep_def"/>
    <property type="match status" value="1"/>
</dbReference>
<dbReference type="PRINTS" id="PR01576">
    <property type="entry name" value="PDEFORMYLASE"/>
</dbReference>
<dbReference type="SUPFAM" id="SSF56420">
    <property type="entry name" value="Peptide deformylase"/>
    <property type="match status" value="1"/>
</dbReference>
<feature type="chain" id="PRO_0000301005" description="Peptide deformylase">
    <location>
        <begin position="1"/>
        <end position="184"/>
    </location>
</feature>
<feature type="active site" evidence="1">
    <location>
        <position position="141"/>
    </location>
</feature>
<feature type="binding site" evidence="1">
    <location>
        <position position="98"/>
    </location>
    <ligand>
        <name>Fe cation</name>
        <dbReference type="ChEBI" id="CHEBI:24875"/>
    </ligand>
</feature>
<feature type="binding site" evidence="1">
    <location>
        <position position="140"/>
    </location>
    <ligand>
        <name>Fe cation</name>
        <dbReference type="ChEBI" id="CHEBI:24875"/>
    </ligand>
</feature>
<feature type="binding site" evidence="1">
    <location>
        <position position="144"/>
    </location>
    <ligand>
        <name>Fe cation</name>
        <dbReference type="ChEBI" id="CHEBI:24875"/>
    </ligand>
</feature>
<comment type="function">
    <text evidence="1">Removes the formyl group from the N-terminal Met of newly synthesized proteins. Requires at least a dipeptide for an efficient rate of reaction. N-terminal L-methionine is a prerequisite for activity but the enzyme has broad specificity at other positions.</text>
</comment>
<comment type="catalytic activity">
    <reaction evidence="1">
        <text>N-terminal N-formyl-L-methionyl-[peptide] + H2O = N-terminal L-methionyl-[peptide] + formate</text>
        <dbReference type="Rhea" id="RHEA:24420"/>
        <dbReference type="Rhea" id="RHEA-COMP:10639"/>
        <dbReference type="Rhea" id="RHEA-COMP:10640"/>
        <dbReference type="ChEBI" id="CHEBI:15377"/>
        <dbReference type="ChEBI" id="CHEBI:15740"/>
        <dbReference type="ChEBI" id="CHEBI:49298"/>
        <dbReference type="ChEBI" id="CHEBI:64731"/>
        <dbReference type="EC" id="3.5.1.88"/>
    </reaction>
</comment>
<comment type="cofactor">
    <cofactor evidence="1">
        <name>Fe(2+)</name>
        <dbReference type="ChEBI" id="CHEBI:29033"/>
    </cofactor>
    <text evidence="1">Binds 1 Fe(2+) ion.</text>
</comment>
<comment type="similarity">
    <text evidence="1">Belongs to the polypeptide deformylase family.</text>
</comment>
<proteinExistence type="inferred from homology"/>
<gene>
    <name evidence="1" type="primary">def</name>
    <name type="ordered locus">BVU_4061</name>
</gene>
<sequence length="184" mass="21019">MILPIYVYGQPVLRKEAEDITPDYPNLKELIANMFETMNRADGVGLAAPQIGLPIRVVTIDLDVMSDDLPEFKDFRRAYINPHILEVGGEEVSMEEGCLSLPGIHEAVKRPDRIHVTYLDEELKEHDEWVEGYLARVMQHEFDHLDGKMFIDHLSALRKQMIKGKLGAMLKGKARCSYKVKTIK</sequence>
<accession>A6L7J9</accession>
<reference key="1">
    <citation type="journal article" date="2007" name="PLoS Biol.">
        <title>Evolution of symbiotic bacteria in the distal human intestine.</title>
        <authorList>
            <person name="Xu J."/>
            <person name="Mahowald M.A."/>
            <person name="Ley R.E."/>
            <person name="Lozupone C.A."/>
            <person name="Hamady M."/>
            <person name="Martens E.C."/>
            <person name="Henrissat B."/>
            <person name="Coutinho P.M."/>
            <person name="Minx P."/>
            <person name="Latreille P."/>
            <person name="Cordum H."/>
            <person name="Van Brunt A."/>
            <person name="Kim K."/>
            <person name="Fulton R.S."/>
            <person name="Fulton L.A."/>
            <person name="Clifton S.W."/>
            <person name="Wilson R.K."/>
            <person name="Knight R.D."/>
            <person name="Gordon J.I."/>
        </authorList>
    </citation>
    <scope>NUCLEOTIDE SEQUENCE [LARGE SCALE GENOMIC DNA]</scope>
    <source>
        <strain>ATCC 8482 / DSM 1447 / JCM 5826 / CCUG 4940 / NBRC 14291 / NCTC 11154</strain>
    </source>
</reference>
<organism>
    <name type="scientific">Phocaeicola vulgatus (strain ATCC 8482 / DSM 1447 / JCM 5826 / CCUG 4940 / NBRC 14291 / NCTC 11154)</name>
    <name type="common">Bacteroides vulgatus</name>
    <dbReference type="NCBI Taxonomy" id="435590"/>
    <lineage>
        <taxon>Bacteria</taxon>
        <taxon>Pseudomonadati</taxon>
        <taxon>Bacteroidota</taxon>
        <taxon>Bacteroidia</taxon>
        <taxon>Bacteroidales</taxon>
        <taxon>Bacteroidaceae</taxon>
        <taxon>Phocaeicola</taxon>
    </lineage>
</organism>
<name>DEF_PHOV8</name>
<evidence type="ECO:0000255" key="1">
    <source>
        <dbReference type="HAMAP-Rule" id="MF_00163"/>
    </source>
</evidence>